<keyword id="KW-0131">Cell cycle</keyword>
<keyword id="KW-0132">Cell division</keyword>
<keyword id="KW-0238">DNA-binding</keyword>
<keyword id="KW-1185">Reference proteome</keyword>
<name>WHIA_MYCBO</name>
<organism>
    <name type="scientific">Mycobacterium bovis (strain ATCC BAA-935 / AF2122/97)</name>
    <dbReference type="NCBI Taxonomy" id="233413"/>
    <lineage>
        <taxon>Bacteria</taxon>
        <taxon>Bacillati</taxon>
        <taxon>Actinomycetota</taxon>
        <taxon>Actinomycetes</taxon>
        <taxon>Mycobacteriales</taxon>
        <taxon>Mycobacteriaceae</taxon>
        <taxon>Mycobacterium</taxon>
        <taxon>Mycobacterium tuberculosis complex</taxon>
    </lineage>
</organism>
<comment type="function">
    <text evidence="2">Involved in cell division and chromosome segregation.</text>
</comment>
<comment type="similarity">
    <text evidence="2">Belongs to the WhiA family.</text>
</comment>
<comment type="sequence caution" evidence="1">
    <conflict type="erroneous initiation">
        <sequence resource="EMBL-CDS" id="SIU00061"/>
    </conflict>
    <text>Truncated N-terminus.</text>
</comment>
<reference key="1">
    <citation type="journal article" date="2003" name="Proc. Natl. Acad. Sci. U.S.A.">
        <title>The complete genome sequence of Mycobacterium bovis.</title>
        <authorList>
            <person name="Garnier T."/>
            <person name="Eiglmeier K."/>
            <person name="Camus J.-C."/>
            <person name="Medina N."/>
            <person name="Mansoor H."/>
            <person name="Pryor M."/>
            <person name="Duthoy S."/>
            <person name="Grondin S."/>
            <person name="Lacroix C."/>
            <person name="Monsempe C."/>
            <person name="Simon S."/>
            <person name="Harris B."/>
            <person name="Atkin R."/>
            <person name="Doggett J."/>
            <person name="Mayes R."/>
            <person name="Keating L."/>
            <person name="Wheeler P.R."/>
            <person name="Parkhill J."/>
            <person name="Barrell B.G."/>
            <person name="Cole S.T."/>
            <person name="Gordon S.V."/>
            <person name="Hewinson R.G."/>
        </authorList>
    </citation>
    <scope>NUCLEOTIDE SEQUENCE [LARGE SCALE GENOMIC DNA]</scope>
    <source>
        <strain>ATCC BAA-935 / AF2122/97</strain>
    </source>
</reference>
<reference key="2">
    <citation type="journal article" date="2017" name="Genome Announc.">
        <title>Updated reference genome sequence and annotation of Mycobacterium bovis AF2122/97.</title>
        <authorList>
            <person name="Malone K.M."/>
            <person name="Farrell D."/>
            <person name="Stuber T.P."/>
            <person name="Schubert O.T."/>
            <person name="Aebersold R."/>
            <person name="Robbe-Austerman S."/>
            <person name="Gordon S.V."/>
        </authorList>
    </citation>
    <scope>NUCLEOTIDE SEQUENCE [LARGE SCALE GENOMIC DNA]</scope>
    <scope>GENOME REANNOTATION</scope>
    <source>
        <strain>ATCC BAA-935 / AF2122/97</strain>
    </source>
</reference>
<proteinExistence type="inferred from homology"/>
<protein>
    <recommendedName>
        <fullName evidence="2">Probable cell division protein WhiA</fullName>
    </recommendedName>
</protein>
<accession>Q7U040</accession>
<accession>A0A1R3XYA6</accession>
<accession>X2BHW9</accession>
<dbReference type="EMBL" id="LT708304">
    <property type="protein sequence ID" value="SIU00061.1"/>
    <property type="status" value="ALT_INIT"/>
    <property type="molecule type" value="Genomic_DNA"/>
</dbReference>
<dbReference type="RefSeq" id="NP_855110.1">
    <property type="nucleotide sequence ID" value="NC_002945.3"/>
</dbReference>
<dbReference type="SMR" id="Q7U040"/>
<dbReference type="KEGG" id="mbo:BQ2027_MB1458"/>
<dbReference type="PATRIC" id="fig|233413.5.peg.1593"/>
<dbReference type="Proteomes" id="UP000001419">
    <property type="component" value="Chromosome"/>
</dbReference>
<dbReference type="GO" id="GO:0003677">
    <property type="term" value="F:DNA binding"/>
    <property type="evidence" value="ECO:0007669"/>
    <property type="project" value="UniProtKB-UniRule"/>
</dbReference>
<dbReference type="GO" id="GO:0051301">
    <property type="term" value="P:cell division"/>
    <property type="evidence" value="ECO:0007669"/>
    <property type="project" value="UniProtKB-UniRule"/>
</dbReference>
<dbReference type="GO" id="GO:0043937">
    <property type="term" value="P:regulation of sporulation"/>
    <property type="evidence" value="ECO:0007669"/>
    <property type="project" value="InterPro"/>
</dbReference>
<dbReference type="FunFam" id="3.10.28.10:FF:000001">
    <property type="entry name" value="Probable cell division protein WhiA"/>
    <property type="match status" value="1"/>
</dbReference>
<dbReference type="Gene3D" id="3.10.28.10">
    <property type="entry name" value="Homing endonucleases"/>
    <property type="match status" value="1"/>
</dbReference>
<dbReference type="HAMAP" id="MF_01420">
    <property type="entry name" value="HTH_type_WhiA"/>
    <property type="match status" value="1"/>
</dbReference>
<dbReference type="InterPro" id="IPR027434">
    <property type="entry name" value="Homing_endonucl"/>
</dbReference>
<dbReference type="InterPro" id="IPR018478">
    <property type="entry name" value="Sporu_reg_WhiA_N_dom"/>
</dbReference>
<dbReference type="InterPro" id="IPR003802">
    <property type="entry name" value="Sporulation_regulator_WhiA"/>
</dbReference>
<dbReference type="InterPro" id="IPR023054">
    <property type="entry name" value="Sporulation_regulator_WhiA_C"/>
</dbReference>
<dbReference type="InterPro" id="IPR039518">
    <property type="entry name" value="WhiA_LAGLIDADG_dom"/>
</dbReference>
<dbReference type="NCBIfam" id="TIGR00647">
    <property type="entry name" value="DNA_bind_WhiA"/>
    <property type="match status" value="1"/>
</dbReference>
<dbReference type="PANTHER" id="PTHR37307">
    <property type="entry name" value="CELL DIVISION PROTEIN WHIA-RELATED"/>
    <property type="match status" value="1"/>
</dbReference>
<dbReference type="PANTHER" id="PTHR37307:SF1">
    <property type="entry name" value="CELL DIVISION PROTEIN WHIA-RELATED"/>
    <property type="match status" value="1"/>
</dbReference>
<dbReference type="Pfam" id="PF02650">
    <property type="entry name" value="HTH_WhiA"/>
    <property type="match status" value="1"/>
</dbReference>
<dbReference type="Pfam" id="PF14527">
    <property type="entry name" value="LAGLIDADG_WhiA"/>
    <property type="match status" value="1"/>
</dbReference>
<dbReference type="Pfam" id="PF10298">
    <property type="entry name" value="WhiA_N"/>
    <property type="match status" value="1"/>
</dbReference>
<evidence type="ECO:0000250" key="1">
    <source>
        <dbReference type="UniProtKB" id="P9WF45"/>
    </source>
</evidence>
<evidence type="ECO:0000255" key="2">
    <source>
        <dbReference type="HAMAP-Rule" id="MF_01420"/>
    </source>
</evidence>
<gene>
    <name evidence="2" type="primary">whiA</name>
    <name type="ordered locus">BQ2027_MB1458</name>
</gene>
<sequence length="327" mass="35135">MAMTTDVKDELSRLVVKSVSARRAEVTSLLRFAGGLHIVGGRVVVEAELDLGSIARRLRKEIFELYGYTAVVHVLSASGIRKSTRYVLRVANDGEALARQTGLLDMRGRPVRGLPAQVVGGSIDDAEAAWRGAFLAHGSLTEPGRSSALEVSCPGPEAALALVGAARRLGVGAKAREVRGADRVVVRDGEAIGALLTRMGAQDTRLVWEERRLRREVRATANRLANFDDANLRRSARAAVAAAARVERALEILGDTVPEHLASAGKLRVEHRQASLEELGRLADPPMTKDAVAGRIRRLLSMADRKAKVDGIPDTESVVTPDLLEDA</sequence>
<feature type="chain" id="PRO_0000376523" description="Probable cell division protein WhiA">
    <location>
        <begin position="1"/>
        <end position="327"/>
    </location>
</feature>
<feature type="DNA-binding region" description="H-T-H motif" evidence="2">
    <location>
        <begin position="275"/>
        <end position="308"/>
    </location>
</feature>